<dbReference type="EC" id="4.1.1.48" evidence="1"/>
<dbReference type="EMBL" id="CP001182">
    <property type="protein sequence ID" value="ACJ42140.1"/>
    <property type="molecule type" value="Genomic_DNA"/>
</dbReference>
<dbReference type="RefSeq" id="WP_000608308.1">
    <property type="nucleotide sequence ID" value="NC_011586.2"/>
</dbReference>
<dbReference type="SMR" id="B7I441"/>
<dbReference type="KEGG" id="abn:AB57_2790"/>
<dbReference type="HOGENOM" id="CLU_034247_2_0_6"/>
<dbReference type="UniPathway" id="UPA00035">
    <property type="reaction ID" value="UER00043"/>
</dbReference>
<dbReference type="Proteomes" id="UP000007094">
    <property type="component" value="Chromosome"/>
</dbReference>
<dbReference type="GO" id="GO:0004425">
    <property type="term" value="F:indole-3-glycerol-phosphate synthase activity"/>
    <property type="evidence" value="ECO:0007669"/>
    <property type="project" value="UniProtKB-UniRule"/>
</dbReference>
<dbReference type="GO" id="GO:0004640">
    <property type="term" value="F:phosphoribosylanthranilate isomerase activity"/>
    <property type="evidence" value="ECO:0007669"/>
    <property type="project" value="TreeGrafter"/>
</dbReference>
<dbReference type="GO" id="GO:0000162">
    <property type="term" value="P:L-tryptophan biosynthetic process"/>
    <property type="evidence" value="ECO:0007669"/>
    <property type="project" value="UniProtKB-UniRule"/>
</dbReference>
<dbReference type="CDD" id="cd00331">
    <property type="entry name" value="IGPS"/>
    <property type="match status" value="1"/>
</dbReference>
<dbReference type="FunFam" id="3.20.20.70:FF:000024">
    <property type="entry name" value="Indole-3-glycerol phosphate synthase"/>
    <property type="match status" value="1"/>
</dbReference>
<dbReference type="Gene3D" id="3.20.20.70">
    <property type="entry name" value="Aldolase class I"/>
    <property type="match status" value="1"/>
</dbReference>
<dbReference type="HAMAP" id="MF_00134_B">
    <property type="entry name" value="IGPS_B"/>
    <property type="match status" value="1"/>
</dbReference>
<dbReference type="InterPro" id="IPR013785">
    <property type="entry name" value="Aldolase_TIM"/>
</dbReference>
<dbReference type="InterPro" id="IPR045186">
    <property type="entry name" value="Indole-3-glycerol_P_synth"/>
</dbReference>
<dbReference type="InterPro" id="IPR013798">
    <property type="entry name" value="Indole-3-glycerol_P_synth_dom"/>
</dbReference>
<dbReference type="InterPro" id="IPR001468">
    <property type="entry name" value="Indole-3-GlycerolPSynthase_CS"/>
</dbReference>
<dbReference type="InterPro" id="IPR011060">
    <property type="entry name" value="RibuloseP-bd_barrel"/>
</dbReference>
<dbReference type="NCBIfam" id="NF001373">
    <property type="entry name" value="PRK00278.1-6"/>
    <property type="match status" value="1"/>
</dbReference>
<dbReference type="NCBIfam" id="NF001377">
    <property type="entry name" value="PRK00278.2-4"/>
    <property type="match status" value="1"/>
</dbReference>
<dbReference type="PANTHER" id="PTHR22854:SF2">
    <property type="entry name" value="INDOLE-3-GLYCEROL-PHOSPHATE SYNTHASE"/>
    <property type="match status" value="1"/>
</dbReference>
<dbReference type="PANTHER" id="PTHR22854">
    <property type="entry name" value="TRYPTOPHAN BIOSYNTHESIS PROTEIN"/>
    <property type="match status" value="1"/>
</dbReference>
<dbReference type="Pfam" id="PF00218">
    <property type="entry name" value="IGPS"/>
    <property type="match status" value="1"/>
</dbReference>
<dbReference type="SUPFAM" id="SSF51366">
    <property type="entry name" value="Ribulose-phoshate binding barrel"/>
    <property type="match status" value="1"/>
</dbReference>
<dbReference type="PROSITE" id="PS00614">
    <property type="entry name" value="IGPS"/>
    <property type="match status" value="1"/>
</dbReference>
<organism>
    <name type="scientific">Acinetobacter baumannii (strain AB0057)</name>
    <dbReference type="NCBI Taxonomy" id="480119"/>
    <lineage>
        <taxon>Bacteria</taxon>
        <taxon>Pseudomonadati</taxon>
        <taxon>Pseudomonadota</taxon>
        <taxon>Gammaproteobacteria</taxon>
        <taxon>Moraxellales</taxon>
        <taxon>Moraxellaceae</taxon>
        <taxon>Acinetobacter</taxon>
        <taxon>Acinetobacter calcoaceticus/baumannii complex</taxon>
    </lineage>
</organism>
<name>TRPC_ACIB5</name>
<comment type="catalytic activity">
    <reaction evidence="1">
        <text>1-(2-carboxyphenylamino)-1-deoxy-D-ribulose 5-phosphate + H(+) = (1S,2R)-1-C-(indol-3-yl)glycerol 3-phosphate + CO2 + H2O</text>
        <dbReference type="Rhea" id="RHEA:23476"/>
        <dbReference type="ChEBI" id="CHEBI:15377"/>
        <dbReference type="ChEBI" id="CHEBI:15378"/>
        <dbReference type="ChEBI" id="CHEBI:16526"/>
        <dbReference type="ChEBI" id="CHEBI:58613"/>
        <dbReference type="ChEBI" id="CHEBI:58866"/>
        <dbReference type="EC" id="4.1.1.48"/>
    </reaction>
</comment>
<comment type="pathway">
    <text evidence="1">Amino-acid biosynthesis; L-tryptophan biosynthesis; L-tryptophan from chorismate: step 4/5.</text>
</comment>
<comment type="similarity">
    <text evidence="1">Belongs to the TrpC family.</text>
</comment>
<evidence type="ECO:0000255" key="1">
    <source>
        <dbReference type="HAMAP-Rule" id="MF_00134"/>
    </source>
</evidence>
<feature type="chain" id="PRO_1000117766" description="Indole-3-glycerol phosphate synthase">
    <location>
        <begin position="1"/>
        <end position="268"/>
    </location>
</feature>
<gene>
    <name evidence="1" type="primary">trpC</name>
    <name type="ordered locus">AB57_2790</name>
</gene>
<proteinExistence type="inferred from homology"/>
<protein>
    <recommendedName>
        <fullName evidence="1">Indole-3-glycerol phosphate synthase</fullName>
        <shortName evidence="1">IGPS</shortName>
        <ecNumber evidence="1">4.1.1.48</ecNumber>
    </recommendedName>
</protein>
<sequence length="268" mass="29911">MINIQNTILGKIVDRKHEELAARLKQRNLQDVEELAKAATPVRGFANALQHKRPGVIAEIKKASPSKGIIRADFNPAEIAQQYEQAGAACLSVLTDVDFFQGADENIAIARNHCALPALRKDFLVDPYNVVEARALHADCILLIVACLSDQQLEEMSKTAFEHQLDVLVEVHDEEELERALKLSEQCLLGVNNRNLKTFDVDLNTTIRLKKLLPASRLLITESGIATPDDVRMMQEHDIHSFLVGESFMKQPRPDQAFTALFGQPQTV</sequence>
<reference key="1">
    <citation type="journal article" date="2008" name="J. Bacteriol.">
        <title>Comparative genome sequence analysis of multidrug-resistant Acinetobacter baumannii.</title>
        <authorList>
            <person name="Adams M.D."/>
            <person name="Goglin K."/>
            <person name="Molyneaux N."/>
            <person name="Hujer K.M."/>
            <person name="Lavender H."/>
            <person name="Jamison J.J."/>
            <person name="MacDonald I.J."/>
            <person name="Martin K.M."/>
            <person name="Russo T."/>
            <person name="Campagnari A.A."/>
            <person name="Hujer A.M."/>
            <person name="Bonomo R.A."/>
            <person name="Gill S.R."/>
        </authorList>
    </citation>
    <scope>NUCLEOTIDE SEQUENCE [LARGE SCALE GENOMIC DNA]</scope>
    <source>
        <strain>AB0057</strain>
    </source>
</reference>
<accession>B7I441</accession>
<keyword id="KW-0028">Amino-acid biosynthesis</keyword>
<keyword id="KW-0057">Aromatic amino acid biosynthesis</keyword>
<keyword id="KW-0210">Decarboxylase</keyword>
<keyword id="KW-0456">Lyase</keyword>
<keyword id="KW-0822">Tryptophan biosynthesis</keyword>